<evidence type="ECO:0000250" key="1"/>
<evidence type="ECO:0000305" key="2"/>
<accession>P36282</accession>
<organismHost>
    <name type="scientific">Cynanchum acutum</name>
    <dbReference type="NCBI Taxonomy" id="185024"/>
</organismHost>
<organismHost>
    <name type="scientific">Malva parviflora</name>
    <name type="common">Little mallow</name>
    <name type="synonym">Cheeseweed mallow</name>
    <dbReference type="NCBI Taxonomy" id="145753"/>
</organismHost>
<organismHost>
    <name type="scientific">Solanum lycopersicum</name>
    <name type="common">Tomato</name>
    <name type="synonym">Lycopersicon esculentum</name>
    <dbReference type="NCBI Taxonomy" id="4081"/>
</organismHost>
<comment type="function">
    <text evidence="1">Through its interaction with host SGS3, acts as a suppressor of RNA-mediated gene silencing, also known as post-transcriptional gene silencing (PTGS), a mechanism of plant viral defense that limits the accumulation of viral RNAs.</text>
</comment>
<comment type="subunit">
    <text evidence="1">Interacts with host SGS3.</text>
</comment>
<comment type="subcellular location">
    <subcellularLocation>
        <location evidence="1">Host cytoplasm</location>
        <location evidence="1">Host perinuclear region</location>
    </subcellularLocation>
    <text evidence="1">Accumulates in inclusion bodies in the cell periphery. May interact with the ER network from the perinuclear region out to the cell periphery (By similarity).</text>
</comment>
<comment type="similarity">
    <text evidence="2">Belongs to the geminiviridae protein AV2/V2 family.</text>
</comment>
<proteinExistence type="inferred from homology"/>
<name>AV2_TLCVA</name>
<sequence>MWDPLVHEFPETVHGFRCMLANKYLLAVESKYAPDTLGYELIRDCIGVVRSRNYEQATSRYRDIYTRLQGATEAELQQSVQERCCCPHCPRHKKADMGESAHVQKAHDVQAVQKP</sequence>
<protein>
    <recommendedName>
        <fullName>Protein V2</fullName>
    </recommendedName>
</protein>
<gene>
    <name type="ORF">V2</name>
</gene>
<dbReference type="EMBL" id="S53251">
    <property type="protein sequence ID" value="AAM33777.1"/>
    <property type="molecule type" value="Genomic_DNA"/>
</dbReference>
<dbReference type="PIR" id="JQ1885">
    <property type="entry name" value="JQ1885"/>
</dbReference>
<dbReference type="KEGG" id="vg:944500"/>
<dbReference type="Proteomes" id="UP000008246">
    <property type="component" value="Genome"/>
</dbReference>
<dbReference type="GO" id="GO:0044220">
    <property type="term" value="C:host cell perinuclear region of cytoplasm"/>
    <property type="evidence" value="ECO:0007669"/>
    <property type="project" value="UniProtKB-SubCell"/>
</dbReference>
<dbReference type="GO" id="GO:0060967">
    <property type="term" value="P:negative regulation of gene silencing by regulatory ncRNA"/>
    <property type="evidence" value="ECO:0007669"/>
    <property type="project" value="InterPro"/>
</dbReference>
<dbReference type="GO" id="GO:0052170">
    <property type="term" value="P:symbiont-mediated suppression of host innate immune response"/>
    <property type="evidence" value="ECO:0007669"/>
    <property type="project" value="UniProtKB-KW"/>
</dbReference>
<dbReference type="InterPro" id="IPR002511">
    <property type="entry name" value="Gemini_V2"/>
</dbReference>
<dbReference type="InterPro" id="IPR005159">
    <property type="entry name" value="WCCH"/>
</dbReference>
<dbReference type="Pfam" id="PF01524">
    <property type="entry name" value="Gemini_V2"/>
    <property type="match status" value="1"/>
</dbReference>
<dbReference type="Pfam" id="PF03716">
    <property type="entry name" value="WCCH"/>
    <property type="match status" value="1"/>
</dbReference>
<reference key="1">
    <citation type="journal article" date="1993" name="J. Gen. Virol.">
        <title>Nucleotide sequence and genome organization of tomato leaf curl geminivirus.</title>
        <authorList>
            <person name="Dry I.B."/>
            <person name="Rigden J.E."/>
            <person name="Krake L.R."/>
            <person name="Mullineaux P.M."/>
            <person name="Rezaian M.A."/>
        </authorList>
    </citation>
    <scope>NUCLEOTIDE SEQUENCE [GENOMIC DNA]</scope>
</reference>
<keyword id="KW-1035">Host cytoplasm</keyword>
<keyword id="KW-0945">Host-virus interaction</keyword>
<keyword id="KW-1090">Inhibition of host innate immune response by virus</keyword>
<keyword id="KW-1185">Reference proteome</keyword>
<keyword id="KW-0941">Suppressor of RNA silencing</keyword>
<keyword id="KW-0899">Viral immunoevasion</keyword>
<organism>
    <name type="scientific">Tomato leaf curl virus (strain Australia)</name>
    <name type="common">ToLCV</name>
    <dbReference type="NCBI Taxonomy" id="223353"/>
    <lineage>
        <taxon>Viruses</taxon>
        <taxon>Monodnaviria</taxon>
        <taxon>Shotokuvirae</taxon>
        <taxon>Cressdnaviricota</taxon>
        <taxon>Repensiviricetes</taxon>
        <taxon>Geplafuvirales</taxon>
        <taxon>Geminiviridae</taxon>
        <taxon>Begomovirus</taxon>
        <taxon>Tomato leaf curl virus</taxon>
    </lineage>
</organism>
<feature type="chain" id="PRO_0000222278" description="Protein V2">
    <location>
        <begin position="1"/>
        <end position="115"/>
    </location>
</feature>